<comment type="similarity">
    <text evidence="1">Belongs to the SfsA family.</text>
</comment>
<proteinExistence type="inferred from homology"/>
<reference key="1">
    <citation type="journal article" date="2004" name="Proc. Natl. Acad. Sci. U.S.A.">
        <title>The louse-borne human pathogen Bartonella quintana is a genomic derivative of the zoonotic agent Bartonella henselae.</title>
        <authorList>
            <person name="Alsmark U.C.M."/>
            <person name="Frank A.C."/>
            <person name="Karlberg E.O."/>
            <person name="Legault B.-A."/>
            <person name="Ardell D.H."/>
            <person name="Canbaeck B."/>
            <person name="Eriksson A.-S."/>
            <person name="Naeslund A.K."/>
            <person name="Handley S.A."/>
            <person name="Huvet M."/>
            <person name="La Scola B."/>
            <person name="Holmberg M."/>
            <person name="Andersson S.G.E."/>
        </authorList>
    </citation>
    <scope>NUCLEOTIDE SEQUENCE [LARGE SCALE GENOMIC DNA]</scope>
    <source>
        <strain>Toulouse</strain>
    </source>
</reference>
<dbReference type="EMBL" id="BX897700">
    <property type="protein sequence ID" value="CAF26113.1"/>
    <property type="molecule type" value="Genomic_DNA"/>
</dbReference>
<dbReference type="RefSeq" id="WP_011179376.1">
    <property type="nucleotide sequence ID" value="NC_005955.1"/>
</dbReference>
<dbReference type="SMR" id="Q6FZU1"/>
<dbReference type="GeneID" id="56533018"/>
<dbReference type="KEGG" id="bqu:BQ06220"/>
<dbReference type="eggNOG" id="COG1489">
    <property type="taxonomic scope" value="Bacteria"/>
</dbReference>
<dbReference type="HOGENOM" id="CLU_052299_2_0_5"/>
<dbReference type="OrthoDB" id="9802365at2"/>
<dbReference type="Proteomes" id="UP000000597">
    <property type="component" value="Chromosome"/>
</dbReference>
<dbReference type="GO" id="GO:0003677">
    <property type="term" value="F:DNA binding"/>
    <property type="evidence" value="ECO:0007669"/>
    <property type="project" value="InterPro"/>
</dbReference>
<dbReference type="CDD" id="cd22359">
    <property type="entry name" value="SfsA-like_bacterial"/>
    <property type="match status" value="1"/>
</dbReference>
<dbReference type="Gene3D" id="2.40.50.580">
    <property type="match status" value="1"/>
</dbReference>
<dbReference type="Gene3D" id="3.40.1350.60">
    <property type="match status" value="1"/>
</dbReference>
<dbReference type="HAMAP" id="MF_00095">
    <property type="entry name" value="SfsA"/>
    <property type="match status" value="1"/>
</dbReference>
<dbReference type="InterPro" id="IPR005224">
    <property type="entry name" value="SfsA"/>
</dbReference>
<dbReference type="InterPro" id="IPR040452">
    <property type="entry name" value="SfsA_C"/>
</dbReference>
<dbReference type="InterPro" id="IPR041465">
    <property type="entry name" value="SfsA_N"/>
</dbReference>
<dbReference type="NCBIfam" id="TIGR00230">
    <property type="entry name" value="sfsA"/>
    <property type="match status" value="1"/>
</dbReference>
<dbReference type="PANTHER" id="PTHR30545">
    <property type="entry name" value="SUGAR FERMENTATION STIMULATION PROTEIN A"/>
    <property type="match status" value="1"/>
</dbReference>
<dbReference type="PANTHER" id="PTHR30545:SF2">
    <property type="entry name" value="SUGAR FERMENTATION STIMULATION PROTEIN A"/>
    <property type="match status" value="1"/>
</dbReference>
<dbReference type="Pfam" id="PF03749">
    <property type="entry name" value="SfsA"/>
    <property type="match status" value="1"/>
</dbReference>
<dbReference type="Pfam" id="PF17746">
    <property type="entry name" value="SfsA_N"/>
    <property type="match status" value="1"/>
</dbReference>
<protein>
    <recommendedName>
        <fullName evidence="1">Sugar fermentation stimulation protein homolog</fullName>
    </recommendedName>
</protein>
<name>SFSA_BARQU</name>
<feature type="chain" id="PRO_0000152272" description="Sugar fermentation stimulation protein homolog">
    <location>
        <begin position="1"/>
        <end position="234"/>
    </location>
</feature>
<gene>
    <name evidence="1" type="primary">sfsA</name>
    <name type="ordered locus">BQ06220</name>
</gene>
<accession>Q6FZU1</accession>
<sequence>MLFIPKLFPAKLIRRYKRFLADVKRDDQDIFTVSVPNTGSMLGLITPNSNIWLSYHNNSKRKYVYQLEIVEANNSLVGINTTLPNKLALEAIQNGLLPELNGYKTILKEQRYGTQSRIDFLLRDDILPDCYLEVKNVHFIRQKELAEFPDTETKRGTRHLEELIKIVQQGKRAAMLYMIQREDCSAFTICRDLDPTYGRKFDLALKSGVEFYAVKCHVSVEGIFPIHRVKIEND</sequence>
<evidence type="ECO:0000255" key="1">
    <source>
        <dbReference type="HAMAP-Rule" id="MF_00095"/>
    </source>
</evidence>
<organism>
    <name type="scientific">Bartonella quintana (strain Toulouse)</name>
    <name type="common">Rochalimaea quintana</name>
    <dbReference type="NCBI Taxonomy" id="283165"/>
    <lineage>
        <taxon>Bacteria</taxon>
        <taxon>Pseudomonadati</taxon>
        <taxon>Pseudomonadota</taxon>
        <taxon>Alphaproteobacteria</taxon>
        <taxon>Hyphomicrobiales</taxon>
        <taxon>Bartonellaceae</taxon>
        <taxon>Bartonella</taxon>
    </lineage>
</organism>